<proteinExistence type="inferred from homology"/>
<dbReference type="EC" id="4.2.1.11" evidence="1"/>
<dbReference type="EMBL" id="CP000825">
    <property type="protein sequence ID" value="ABV49846.1"/>
    <property type="molecule type" value="Genomic_DNA"/>
</dbReference>
<dbReference type="RefSeq" id="WP_012007014.1">
    <property type="nucleotide sequence ID" value="NC_009840.1"/>
</dbReference>
<dbReference type="SMR" id="A8G2L5"/>
<dbReference type="STRING" id="93060.P9215_02271"/>
<dbReference type="KEGG" id="pmh:P9215_02271"/>
<dbReference type="eggNOG" id="COG0148">
    <property type="taxonomic scope" value="Bacteria"/>
</dbReference>
<dbReference type="HOGENOM" id="CLU_031223_2_1_3"/>
<dbReference type="OrthoDB" id="9804716at2"/>
<dbReference type="UniPathway" id="UPA00109">
    <property type="reaction ID" value="UER00187"/>
</dbReference>
<dbReference type="Proteomes" id="UP000002014">
    <property type="component" value="Chromosome"/>
</dbReference>
<dbReference type="GO" id="GO:0009986">
    <property type="term" value="C:cell surface"/>
    <property type="evidence" value="ECO:0007669"/>
    <property type="project" value="UniProtKB-SubCell"/>
</dbReference>
<dbReference type="GO" id="GO:0005576">
    <property type="term" value="C:extracellular region"/>
    <property type="evidence" value="ECO:0007669"/>
    <property type="project" value="UniProtKB-SubCell"/>
</dbReference>
<dbReference type="GO" id="GO:0000015">
    <property type="term" value="C:phosphopyruvate hydratase complex"/>
    <property type="evidence" value="ECO:0007669"/>
    <property type="project" value="InterPro"/>
</dbReference>
<dbReference type="GO" id="GO:0000287">
    <property type="term" value="F:magnesium ion binding"/>
    <property type="evidence" value="ECO:0007669"/>
    <property type="project" value="UniProtKB-UniRule"/>
</dbReference>
<dbReference type="GO" id="GO:0004634">
    <property type="term" value="F:phosphopyruvate hydratase activity"/>
    <property type="evidence" value="ECO:0007669"/>
    <property type="project" value="UniProtKB-UniRule"/>
</dbReference>
<dbReference type="GO" id="GO:0006096">
    <property type="term" value="P:glycolytic process"/>
    <property type="evidence" value="ECO:0007669"/>
    <property type="project" value="UniProtKB-UniRule"/>
</dbReference>
<dbReference type="CDD" id="cd03313">
    <property type="entry name" value="enolase"/>
    <property type="match status" value="1"/>
</dbReference>
<dbReference type="FunFam" id="3.20.20.120:FF:000001">
    <property type="entry name" value="Enolase"/>
    <property type="match status" value="1"/>
</dbReference>
<dbReference type="Gene3D" id="3.20.20.120">
    <property type="entry name" value="Enolase-like C-terminal domain"/>
    <property type="match status" value="1"/>
</dbReference>
<dbReference type="Gene3D" id="3.30.390.10">
    <property type="entry name" value="Enolase-like, N-terminal domain"/>
    <property type="match status" value="1"/>
</dbReference>
<dbReference type="HAMAP" id="MF_00318">
    <property type="entry name" value="Enolase"/>
    <property type="match status" value="1"/>
</dbReference>
<dbReference type="InterPro" id="IPR000941">
    <property type="entry name" value="Enolase"/>
</dbReference>
<dbReference type="InterPro" id="IPR036849">
    <property type="entry name" value="Enolase-like_C_sf"/>
</dbReference>
<dbReference type="InterPro" id="IPR029017">
    <property type="entry name" value="Enolase-like_N"/>
</dbReference>
<dbReference type="InterPro" id="IPR020810">
    <property type="entry name" value="Enolase_C"/>
</dbReference>
<dbReference type="InterPro" id="IPR020809">
    <property type="entry name" value="Enolase_CS"/>
</dbReference>
<dbReference type="InterPro" id="IPR020811">
    <property type="entry name" value="Enolase_N"/>
</dbReference>
<dbReference type="NCBIfam" id="TIGR01060">
    <property type="entry name" value="eno"/>
    <property type="match status" value="1"/>
</dbReference>
<dbReference type="PANTHER" id="PTHR11902">
    <property type="entry name" value="ENOLASE"/>
    <property type="match status" value="1"/>
</dbReference>
<dbReference type="PANTHER" id="PTHR11902:SF1">
    <property type="entry name" value="ENOLASE"/>
    <property type="match status" value="1"/>
</dbReference>
<dbReference type="Pfam" id="PF00113">
    <property type="entry name" value="Enolase_C"/>
    <property type="match status" value="1"/>
</dbReference>
<dbReference type="Pfam" id="PF03952">
    <property type="entry name" value="Enolase_N"/>
    <property type="match status" value="1"/>
</dbReference>
<dbReference type="PIRSF" id="PIRSF001400">
    <property type="entry name" value="Enolase"/>
    <property type="match status" value="1"/>
</dbReference>
<dbReference type="PRINTS" id="PR00148">
    <property type="entry name" value="ENOLASE"/>
</dbReference>
<dbReference type="SFLD" id="SFLDF00002">
    <property type="entry name" value="enolase"/>
    <property type="match status" value="1"/>
</dbReference>
<dbReference type="SFLD" id="SFLDG00178">
    <property type="entry name" value="enolase"/>
    <property type="match status" value="1"/>
</dbReference>
<dbReference type="SMART" id="SM01192">
    <property type="entry name" value="Enolase_C"/>
    <property type="match status" value="1"/>
</dbReference>
<dbReference type="SMART" id="SM01193">
    <property type="entry name" value="Enolase_N"/>
    <property type="match status" value="1"/>
</dbReference>
<dbReference type="SUPFAM" id="SSF51604">
    <property type="entry name" value="Enolase C-terminal domain-like"/>
    <property type="match status" value="1"/>
</dbReference>
<dbReference type="SUPFAM" id="SSF54826">
    <property type="entry name" value="Enolase N-terminal domain-like"/>
    <property type="match status" value="1"/>
</dbReference>
<dbReference type="PROSITE" id="PS00164">
    <property type="entry name" value="ENOLASE"/>
    <property type="match status" value="1"/>
</dbReference>
<feature type="chain" id="PRO_1000059460" description="Enolase">
    <location>
        <begin position="1"/>
        <end position="430"/>
    </location>
</feature>
<feature type="active site" description="Proton donor" evidence="1">
    <location>
        <position position="209"/>
    </location>
</feature>
<feature type="active site" description="Proton acceptor" evidence="1">
    <location>
        <position position="339"/>
    </location>
</feature>
<feature type="binding site" evidence="1">
    <location>
        <position position="167"/>
    </location>
    <ligand>
        <name>(2R)-2-phosphoglycerate</name>
        <dbReference type="ChEBI" id="CHEBI:58289"/>
    </ligand>
</feature>
<feature type="binding site" evidence="1">
    <location>
        <position position="246"/>
    </location>
    <ligand>
        <name>Mg(2+)</name>
        <dbReference type="ChEBI" id="CHEBI:18420"/>
    </ligand>
</feature>
<feature type="binding site" evidence="1">
    <location>
        <position position="287"/>
    </location>
    <ligand>
        <name>Mg(2+)</name>
        <dbReference type="ChEBI" id="CHEBI:18420"/>
    </ligand>
</feature>
<feature type="binding site" evidence="1">
    <location>
        <position position="314"/>
    </location>
    <ligand>
        <name>Mg(2+)</name>
        <dbReference type="ChEBI" id="CHEBI:18420"/>
    </ligand>
</feature>
<feature type="binding site" evidence="1">
    <location>
        <position position="339"/>
    </location>
    <ligand>
        <name>(2R)-2-phosphoglycerate</name>
        <dbReference type="ChEBI" id="CHEBI:58289"/>
    </ligand>
</feature>
<feature type="binding site" evidence="1">
    <location>
        <position position="368"/>
    </location>
    <ligand>
        <name>(2R)-2-phosphoglycerate</name>
        <dbReference type="ChEBI" id="CHEBI:58289"/>
    </ligand>
</feature>
<feature type="binding site" evidence="1">
    <location>
        <position position="369"/>
    </location>
    <ligand>
        <name>(2R)-2-phosphoglycerate</name>
        <dbReference type="ChEBI" id="CHEBI:58289"/>
    </ligand>
</feature>
<feature type="binding site" evidence="1">
    <location>
        <position position="390"/>
    </location>
    <ligand>
        <name>(2R)-2-phosphoglycerate</name>
        <dbReference type="ChEBI" id="CHEBI:58289"/>
    </ligand>
</feature>
<reference key="1">
    <citation type="journal article" date="2007" name="PLoS Genet.">
        <title>Patterns and implications of gene gain and loss in the evolution of Prochlorococcus.</title>
        <authorList>
            <person name="Kettler G.C."/>
            <person name="Martiny A.C."/>
            <person name="Huang K."/>
            <person name="Zucker J."/>
            <person name="Coleman M.L."/>
            <person name="Rodrigue S."/>
            <person name="Chen F."/>
            <person name="Lapidus A."/>
            <person name="Ferriera S."/>
            <person name="Johnson J."/>
            <person name="Steglich C."/>
            <person name="Church G.M."/>
            <person name="Richardson P."/>
            <person name="Chisholm S.W."/>
        </authorList>
    </citation>
    <scope>NUCLEOTIDE SEQUENCE [LARGE SCALE GENOMIC DNA]</scope>
    <source>
        <strain>MIT 9215</strain>
    </source>
</reference>
<gene>
    <name evidence="1" type="primary">eno</name>
    <name type="ordered locus">P9215_02271</name>
</gene>
<protein>
    <recommendedName>
        <fullName evidence="1">Enolase</fullName>
        <ecNumber evidence="1">4.2.1.11</ecNumber>
    </recommendedName>
    <alternativeName>
        <fullName evidence="1">2-phospho-D-glycerate hydro-lyase</fullName>
    </alternativeName>
    <alternativeName>
        <fullName evidence="1">2-phosphoglycerate dehydratase</fullName>
    </alternativeName>
</protein>
<name>ENO_PROM2</name>
<comment type="function">
    <text evidence="1">Catalyzes the reversible conversion of 2-phosphoglycerate (2-PG) into phosphoenolpyruvate (PEP). It is essential for the degradation of carbohydrates via glycolysis.</text>
</comment>
<comment type="catalytic activity">
    <reaction evidence="1">
        <text>(2R)-2-phosphoglycerate = phosphoenolpyruvate + H2O</text>
        <dbReference type="Rhea" id="RHEA:10164"/>
        <dbReference type="ChEBI" id="CHEBI:15377"/>
        <dbReference type="ChEBI" id="CHEBI:58289"/>
        <dbReference type="ChEBI" id="CHEBI:58702"/>
        <dbReference type="EC" id="4.2.1.11"/>
    </reaction>
</comment>
<comment type="cofactor">
    <cofactor evidence="1">
        <name>Mg(2+)</name>
        <dbReference type="ChEBI" id="CHEBI:18420"/>
    </cofactor>
    <text evidence="1">Binds a second Mg(2+) ion via substrate during catalysis.</text>
</comment>
<comment type="pathway">
    <text evidence="1">Carbohydrate degradation; glycolysis; pyruvate from D-glyceraldehyde 3-phosphate: step 4/5.</text>
</comment>
<comment type="subcellular location">
    <subcellularLocation>
        <location evidence="1">Cytoplasm</location>
    </subcellularLocation>
    <subcellularLocation>
        <location evidence="1">Secreted</location>
    </subcellularLocation>
    <subcellularLocation>
        <location evidence="1">Cell surface</location>
    </subcellularLocation>
    <text evidence="1">Fractions of enolase are present in both the cytoplasm and on the cell surface.</text>
</comment>
<comment type="similarity">
    <text evidence="1">Belongs to the enolase family.</text>
</comment>
<sequence>MKETIDFLIDTIEARQVLDSRGNPTVEAEVFLECGASGIAIVPSGASTGAHEAHELRDGGSKYMGKGVLSAVNKIHETISPALCGLSALDQTAVDKLMTEIDGTLNKSNLGANSILAVSLATARASANALDIPLYRYLGDPLSNLLPVPLMNVINGGAHAPNSLDFQEFMLVPHGVNNFSESLRMGTEIFHSLKSLLDQKGLSTAVGDEGGFAPNLSSSEEAGDLLLEAIQKAGFKPGEQVSLALDAASTEFYNDGIYKYEGKSLNSSEMISYLSRLVSNYPIVSIEDGLAEDDWEGWSELNKELGDKVQLVGDDLFVTNTERLRKGIMEKSANSILIKVNQIGTLTETLEAIELAKMSGFTSVISHRSGETEDTTIADLSVATRSGQIKTGSLSRSERIAKYNRLLKIEEELGNQARFAGALGLGPKNI</sequence>
<organism>
    <name type="scientific">Prochlorococcus marinus (strain MIT 9215)</name>
    <dbReference type="NCBI Taxonomy" id="93060"/>
    <lineage>
        <taxon>Bacteria</taxon>
        <taxon>Bacillati</taxon>
        <taxon>Cyanobacteriota</taxon>
        <taxon>Cyanophyceae</taxon>
        <taxon>Synechococcales</taxon>
        <taxon>Prochlorococcaceae</taxon>
        <taxon>Prochlorococcus</taxon>
    </lineage>
</organism>
<accession>A8G2L5</accession>
<evidence type="ECO:0000255" key="1">
    <source>
        <dbReference type="HAMAP-Rule" id="MF_00318"/>
    </source>
</evidence>
<keyword id="KW-0963">Cytoplasm</keyword>
<keyword id="KW-0324">Glycolysis</keyword>
<keyword id="KW-0456">Lyase</keyword>
<keyword id="KW-0460">Magnesium</keyword>
<keyword id="KW-0479">Metal-binding</keyword>
<keyword id="KW-0964">Secreted</keyword>